<gene>
    <name evidence="1" type="primary">ackA</name>
    <name type="ordered locus">GSU2707</name>
</gene>
<reference key="1">
    <citation type="journal article" date="2003" name="Science">
        <title>Genome of Geobacter sulfurreducens: metal reduction in subsurface environments.</title>
        <authorList>
            <person name="Methe B.A."/>
            <person name="Nelson K.E."/>
            <person name="Eisen J.A."/>
            <person name="Paulsen I.T."/>
            <person name="Nelson W.C."/>
            <person name="Heidelberg J.F."/>
            <person name="Wu D."/>
            <person name="Wu M."/>
            <person name="Ward N.L."/>
            <person name="Beanan M.J."/>
            <person name="Dodson R.J."/>
            <person name="Madupu R."/>
            <person name="Brinkac L.M."/>
            <person name="Daugherty S.C."/>
            <person name="DeBoy R.T."/>
            <person name="Durkin A.S."/>
            <person name="Gwinn M.L."/>
            <person name="Kolonay J.F."/>
            <person name="Sullivan S.A."/>
            <person name="Haft D.H."/>
            <person name="Selengut J."/>
            <person name="Davidsen T.M."/>
            <person name="Zafar N."/>
            <person name="White O."/>
            <person name="Tran B."/>
            <person name="Romero C."/>
            <person name="Forberger H.A."/>
            <person name="Weidman J.F."/>
            <person name="Khouri H.M."/>
            <person name="Feldblyum T.V."/>
            <person name="Utterback T.R."/>
            <person name="Van Aken S.E."/>
            <person name="Lovley D.R."/>
            <person name="Fraser C.M."/>
        </authorList>
    </citation>
    <scope>NUCLEOTIDE SEQUENCE [LARGE SCALE GENOMIC DNA]</scope>
    <source>
        <strain>ATCC 51573 / DSM 12127 / PCA</strain>
    </source>
</reference>
<name>ACKA_GEOSL</name>
<feature type="chain" id="PRO_0000107563" description="Acetate kinase">
    <location>
        <begin position="1"/>
        <end position="421"/>
    </location>
</feature>
<feature type="active site" description="Proton donor/acceptor" evidence="1">
    <location>
        <position position="148"/>
    </location>
</feature>
<feature type="binding site" evidence="1">
    <location>
        <position position="7"/>
    </location>
    <ligand>
        <name>Mg(2+)</name>
        <dbReference type="ChEBI" id="CHEBI:18420"/>
    </ligand>
</feature>
<feature type="binding site" evidence="1">
    <location>
        <position position="14"/>
    </location>
    <ligand>
        <name>ATP</name>
        <dbReference type="ChEBI" id="CHEBI:30616"/>
    </ligand>
</feature>
<feature type="binding site" evidence="1">
    <location>
        <position position="91"/>
    </location>
    <ligand>
        <name>substrate</name>
    </ligand>
</feature>
<feature type="binding site" evidence="1">
    <location>
        <begin position="208"/>
        <end position="212"/>
    </location>
    <ligand>
        <name>ATP</name>
        <dbReference type="ChEBI" id="CHEBI:30616"/>
    </ligand>
</feature>
<feature type="binding site" evidence="1">
    <location>
        <begin position="283"/>
        <end position="285"/>
    </location>
    <ligand>
        <name>ATP</name>
        <dbReference type="ChEBI" id="CHEBI:30616"/>
    </ligand>
</feature>
<feature type="binding site" evidence="1">
    <location>
        <position position="387"/>
    </location>
    <ligand>
        <name>Mg(2+)</name>
        <dbReference type="ChEBI" id="CHEBI:18420"/>
    </ligand>
</feature>
<feature type="site" description="Transition state stabilizer" evidence="1">
    <location>
        <position position="180"/>
    </location>
</feature>
<feature type="site" description="Transition state stabilizer" evidence="1">
    <location>
        <position position="241"/>
    </location>
</feature>
<dbReference type="EC" id="2.7.2.1" evidence="1"/>
<dbReference type="EMBL" id="AE017180">
    <property type="protein sequence ID" value="AAR36079.1"/>
    <property type="molecule type" value="Genomic_DNA"/>
</dbReference>
<dbReference type="RefSeq" id="NP_953752.1">
    <property type="nucleotide sequence ID" value="NC_002939.5"/>
</dbReference>
<dbReference type="RefSeq" id="WP_010943345.1">
    <property type="nucleotide sequence ID" value="NC_002939.5"/>
</dbReference>
<dbReference type="SMR" id="Q749N5"/>
<dbReference type="FunCoup" id="Q749N5">
    <property type="interactions" value="353"/>
</dbReference>
<dbReference type="STRING" id="243231.GSU2707"/>
<dbReference type="EnsemblBacteria" id="AAR36079">
    <property type="protein sequence ID" value="AAR36079"/>
    <property type="gene ID" value="GSU2707"/>
</dbReference>
<dbReference type="KEGG" id="gsu:GSU2707"/>
<dbReference type="PATRIC" id="fig|243231.5.peg.2737"/>
<dbReference type="eggNOG" id="COG0282">
    <property type="taxonomic scope" value="Bacteria"/>
</dbReference>
<dbReference type="HOGENOM" id="CLU_020352_0_1_7"/>
<dbReference type="InParanoid" id="Q749N5"/>
<dbReference type="OrthoDB" id="9802453at2"/>
<dbReference type="UniPathway" id="UPA00340">
    <property type="reaction ID" value="UER00458"/>
</dbReference>
<dbReference type="Proteomes" id="UP000000577">
    <property type="component" value="Chromosome"/>
</dbReference>
<dbReference type="GO" id="GO:0005737">
    <property type="term" value="C:cytoplasm"/>
    <property type="evidence" value="ECO:0007669"/>
    <property type="project" value="UniProtKB-SubCell"/>
</dbReference>
<dbReference type="GO" id="GO:0008776">
    <property type="term" value="F:acetate kinase activity"/>
    <property type="evidence" value="ECO:0000318"/>
    <property type="project" value="GO_Central"/>
</dbReference>
<dbReference type="GO" id="GO:0005524">
    <property type="term" value="F:ATP binding"/>
    <property type="evidence" value="ECO:0007669"/>
    <property type="project" value="UniProtKB-KW"/>
</dbReference>
<dbReference type="GO" id="GO:0000287">
    <property type="term" value="F:magnesium ion binding"/>
    <property type="evidence" value="ECO:0007669"/>
    <property type="project" value="UniProtKB-UniRule"/>
</dbReference>
<dbReference type="GO" id="GO:0006083">
    <property type="term" value="P:acetate metabolic process"/>
    <property type="evidence" value="ECO:0000318"/>
    <property type="project" value="GO_Central"/>
</dbReference>
<dbReference type="GO" id="GO:0006085">
    <property type="term" value="P:acetyl-CoA biosynthetic process"/>
    <property type="evidence" value="ECO:0007669"/>
    <property type="project" value="UniProtKB-UniRule"/>
</dbReference>
<dbReference type="CDD" id="cd24010">
    <property type="entry name" value="ASKHA_NBD_AcK_PK"/>
    <property type="match status" value="1"/>
</dbReference>
<dbReference type="Gene3D" id="3.30.420.40">
    <property type="match status" value="2"/>
</dbReference>
<dbReference type="HAMAP" id="MF_00020">
    <property type="entry name" value="Acetate_kinase"/>
    <property type="match status" value="1"/>
</dbReference>
<dbReference type="InterPro" id="IPR004372">
    <property type="entry name" value="Ac/propionate_kinase"/>
</dbReference>
<dbReference type="InterPro" id="IPR000890">
    <property type="entry name" value="Aliphatic_acid_kin_short-chain"/>
</dbReference>
<dbReference type="InterPro" id="IPR023865">
    <property type="entry name" value="Aliphatic_acid_kinase_CS"/>
</dbReference>
<dbReference type="InterPro" id="IPR043129">
    <property type="entry name" value="ATPase_NBD"/>
</dbReference>
<dbReference type="NCBIfam" id="TIGR00016">
    <property type="entry name" value="ackA"/>
    <property type="match status" value="1"/>
</dbReference>
<dbReference type="PANTHER" id="PTHR21060">
    <property type="entry name" value="ACETATE KINASE"/>
    <property type="match status" value="1"/>
</dbReference>
<dbReference type="PANTHER" id="PTHR21060:SF15">
    <property type="entry name" value="ACETATE KINASE-RELATED"/>
    <property type="match status" value="1"/>
</dbReference>
<dbReference type="Pfam" id="PF00871">
    <property type="entry name" value="Acetate_kinase"/>
    <property type="match status" value="1"/>
</dbReference>
<dbReference type="PIRSF" id="PIRSF000722">
    <property type="entry name" value="Acetate_prop_kin"/>
    <property type="match status" value="1"/>
</dbReference>
<dbReference type="PRINTS" id="PR00471">
    <property type="entry name" value="ACETATEKNASE"/>
</dbReference>
<dbReference type="SUPFAM" id="SSF53067">
    <property type="entry name" value="Actin-like ATPase domain"/>
    <property type="match status" value="2"/>
</dbReference>
<dbReference type="PROSITE" id="PS01075">
    <property type="entry name" value="ACETATE_KINASE_1"/>
    <property type="match status" value="1"/>
</dbReference>
<evidence type="ECO:0000255" key="1">
    <source>
        <dbReference type="HAMAP-Rule" id="MF_00020"/>
    </source>
</evidence>
<comment type="function">
    <text evidence="1">Catalyzes the formation of acetyl phosphate from acetate and ATP. Can also catalyze the reverse reaction.</text>
</comment>
<comment type="catalytic activity">
    <reaction evidence="1">
        <text>acetate + ATP = acetyl phosphate + ADP</text>
        <dbReference type="Rhea" id="RHEA:11352"/>
        <dbReference type="ChEBI" id="CHEBI:22191"/>
        <dbReference type="ChEBI" id="CHEBI:30089"/>
        <dbReference type="ChEBI" id="CHEBI:30616"/>
        <dbReference type="ChEBI" id="CHEBI:456216"/>
        <dbReference type="EC" id="2.7.2.1"/>
    </reaction>
</comment>
<comment type="cofactor">
    <cofactor evidence="1">
        <name>Mg(2+)</name>
        <dbReference type="ChEBI" id="CHEBI:18420"/>
    </cofactor>
    <cofactor evidence="1">
        <name>Mn(2+)</name>
        <dbReference type="ChEBI" id="CHEBI:29035"/>
    </cofactor>
    <text evidence="1">Mg(2+). Can also accept Mn(2+).</text>
</comment>
<comment type="pathway">
    <text evidence="1">Metabolic intermediate biosynthesis; acetyl-CoA biosynthesis; acetyl-CoA from acetate: step 1/2.</text>
</comment>
<comment type="subunit">
    <text evidence="1">Homodimer.</text>
</comment>
<comment type="subcellular location">
    <subcellularLocation>
        <location evidence="1">Cytoplasm</location>
    </subcellularLocation>
</comment>
<comment type="similarity">
    <text evidence="1">Belongs to the acetokinase family.</text>
</comment>
<protein>
    <recommendedName>
        <fullName evidence="1">Acetate kinase</fullName>
        <ecNumber evidence="1">2.7.2.1</ecNumber>
    </recommendedName>
    <alternativeName>
        <fullName evidence="1">Acetokinase</fullName>
    </alternativeName>
</protein>
<keyword id="KW-0067">ATP-binding</keyword>
<keyword id="KW-0963">Cytoplasm</keyword>
<keyword id="KW-0418">Kinase</keyword>
<keyword id="KW-0460">Magnesium</keyword>
<keyword id="KW-0479">Metal-binding</keyword>
<keyword id="KW-0547">Nucleotide-binding</keyword>
<keyword id="KW-1185">Reference proteome</keyword>
<keyword id="KW-0808">Transferase</keyword>
<accession>Q749N5</accession>
<proteinExistence type="inferred from homology"/>
<sequence length="421" mass="46894">MIILALNCGSSSVKYQLFDWERKEVVAKGMVERVIIGDSFIMHEVPGRETYRKEYECPDHQVAIDLIIRTVVDADHGVLKDINEISAVGHRVVHGGEMFTRSVLIDEKVLDAVKEVQHLAPLHNPPNIAGIEAAQAVLPHVPHVAIFDTAFHQTMPEHAYLYPLPYEWYEKYGVRRYGFHGTSHLYVSKRAAVLLGKTPSECNIITMHIGNGVSHCAIKGGVSVDTSMGLTPLEGAVMGTRCGDIDPAIPAFMMQKENLSAKEIDSILNKKSGVLGVTGRFTDRRDVIEHASNGDHRCKVALDIEAYRLKKYIGTYMAVLGRLDAVVFTAGVGEMGWPIREKTIEGLEGIGIKLDRERNKGAMTRKRESLITTDDSPIKVFVIPTDEELVFTEDVVAILNGTYTDHMNFDYSFARTDFVRK</sequence>
<organism>
    <name type="scientific">Geobacter sulfurreducens (strain ATCC 51573 / DSM 12127 / PCA)</name>
    <dbReference type="NCBI Taxonomy" id="243231"/>
    <lineage>
        <taxon>Bacteria</taxon>
        <taxon>Pseudomonadati</taxon>
        <taxon>Thermodesulfobacteriota</taxon>
        <taxon>Desulfuromonadia</taxon>
        <taxon>Geobacterales</taxon>
        <taxon>Geobacteraceae</taxon>
        <taxon>Geobacter</taxon>
    </lineage>
</organism>